<accession>P44916</accession>
<sequence>MKKQDLMSIDEIQKLADPDMQKVNQNILAQLNSDVPLIGQLGFYIVQGGGKRIRPLIAVLAARSLGFEGSNSITCATFVEFIHTASLLHDDVVDESDMRRGRATANAEFGNAASVLVGDFIYTRAFQLVAQLESLKILSIMADATNVLAEGEVQQLMNVNDPETSEANYMRVIYSKTARLFEVAGQAAAIVAGGTEAQEKALQDYGRYLGTAFQLVDDVLDYSANTQALGKNVGDDLAEGKPTLPLLHAMRHGNAQQAALIREAIEQGGKREAIDEVLAIMTEHKSLDYAMNRAKEEAQKAVDAIEILPESEYKQALISLAYLSVDRNY</sequence>
<protein>
    <recommendedName>
        <fullName>Octaprenyl diphosphate synthase</fullName>
        <ecNumber>2.5.1.90</ecNumber>
    </recommendedName>
    <alternativeName>
        <fullName>All-trans-octaprenyl-diphosphate synthase</fullName>
    </alternativeName>
    <alternativeName>
        <fullName>Octaprenyl pyrophosphate synthase</fullName>
        <shortName>OPP synthase</shortName>
    </alternativeName>
</protein>
<dbReference type="EC" id="2.5.1.90"/>
<dbReference type="EMBL" id="L42023">
    <property type="protein sequence ID" value="AAC22540.1"/>
    <property type="molecule type" value="Genomic_DNA"/>
</dbReference>
<dbReference type="PIR" id="I64160">
    <property type="entry name" value="I64160"/>
</dbReference>
<dbReference type="RefSeq" id="NP_439042.1">
    <property type="nucleotide sequence ID" value="NC_000907.1"/>
</dbReference>
<dbReference type="SMR" id="P44916"/>
<dbReference type="STRING" id="71421.HI_0881"/>
<dbReference type="EnsemblBacteria" id="AAC22540">
    <property type="protein sequence ID" value="AAC22540"/>
    <property type="gene ID" value="HI_0881"/>
</dbReference>
<dbReference type="KEGG" id="hin:HI_0881"/>
<dbReference type="PATRIC" id="fig|71421.8.peg.923"/>
<dbReference type="eggNOG" id="COG0142">
    <property type="taxonomic scope" value="Bacteria"/>
</dbReference>
<dbReference type="HOGENOM" id="CLU_014015_2_0_6"/>
<dbReference type="OrthoDB" id="9805316at2"/>
<dbReference type="PhylomeDB" id="P44916"/>
<dbReference type="BioCyc" id="HINF71421:G1GJ1-921-MONOMER"/>
<dbReference type="BRENDA" id="2.5.1.90">
    <property type="organism ID" value="2529"/>
</dbReference>
<dbReference type="Proteomes" id="UP000000579">
    <property type="component" value="Chromosome"/>
</dbReference>
<dbReference type="GO" id="GO:0106350">
    <property type="term" value="F:all-trans-octaprenyl-diphosphate synthase activity"/>
    <property type="evidence" value="ECO:0007669"/>
    <property type="project" value="UniProtKB-EC"/>
</dbReference>
<dbReference type="GO" id="GO:0046872">
    <property type="term" value="F:metal ion binding"/>
    <property type="evidence" value="ECO:0007669"/>
    <property type="project" value="UniProtKB-KW"/>
</dbReference>
<dbReference type="GO" id="GO:0004659">
    <property type="term" value="F:prenyltransferase activity"/>
    <property type="evidence" value="ECO:0000318"/>
    <property type="project" value="GO_Central"/>
</dbReference>
<dbReference type="GO" id="GO:0008299">
    <property type="term" value="P:isoprenoid biosynthetic process"/>
    <property type="evidence" value="ECO:0000318"/>
    <property type="project" value="GO_Central"/>
</dbReference>
<dbReference type="CDD" id="cd00685">
    <property type="entry name" value="Trans_IPPS_HT"/>
    <property type="match status" value="1"/>
</dbReference>
<dbReference type="FunFam" id="1.10.600.10:FF:000002">
    <property type="entry name" value="Octaprenyl diphosphate synthase"/>
    <property type="match status" value="1"/>
</dbReference>
<dbReference type="Gene3D" id="1.10.600.10">
    <property type="entry name" value="Farnesyl Diphosphate Synthase"/>
    <property type="match status" value="1"/>
</dbReference>
<dbReference type="InterPro" id="IPR008949">
    <property type="entry name" value="Isoprenoid_synthase_dom_sf"/>
</dbReference>
<dbReference type="InterPro" id="IPR000092">
    <property type="entry name" value="Polyprenyl_synt"/>
</dbReference>
<dbReference type="InterPro" id="IPR033749">
    <property type="entry name" value="Polyprenyl_synt_CS"/>
</dbReference>
<dbReference type="NCBIfam" id="NF008140">
    <property type="entry name" value="PRK10888.1"/>
    <property type="match status" value="1"/>
</dbReference>
<dbReference type="PANTHER" id="PTHR12001:SF69">
    <property type="entry name" value="ALL TRANS-POLYPRENYL-DIPHOSPHATE SYNTHASE PDSS1"/>
    <property type="match status" value="1"/>
</dbReference>
<dbReference type="PANTHER" id="PTHR12001">
    <property type="entry name" value="GERANYLGERANYL PYROPHOSPHATE SYNTHASE"/>
    <property type="match status" value="1"/>
</dbReference>
<dbReference type="Pfam" id="PF00348">
    <property type="entry name" value="polyprenyl_synt"/>
    <property type="match status" value="1"/>
</dbReference>
<dbReference type="SFLD" id="SFLDS00005">
    <property type="entry name" value="Isoprenoid_Synthase_Type_I"/>
    <property type="match status" value="1"/>
</dbReference>
<dbReference type="SUPFAM" id="SSF48576">
    <property type="entry name" value="Terpenoid synthases"/>
    <property type="match status" value="1"/>
</dbReference>
<dbReference type="PROSITE" id="PS00723">
    <property type="entry name" value="POLYPRENYL_SYNTHASE_1"/>
    <property type="match status" value="1"/>
</dbReference>
<dbReference type="PROSITE" id="PS00444">
    <property type="entry name" value="POLYPRENYL_SYNTHASE_2"/>
    <property type="match status" value="1"/>
</dbReference>
<evidence type="ECO:0000250" key="1"/>
<evidence type="ECO:0000250" key="2">
    <source>
        <dbReference type="UniProtKB" id="P14324"/>
    </source>
</evidence>
<evidence type="ECO:0000250" key="3">
    <source>
        <dbReference type="UniProtKB" id="Q12051"/>
    </source>
</evidence>
<evidence type="ECO:0000305" key="4"/>
<proteinExistence type="evidence at protein level"/>
<comment type="function">
    <text evidence="1">Supplies octaprenyl diphosphate, the precursor for the side chain of the isoprenoid quinones ubiquinone and menaquinone.</text>
</comment>
<comment type="catalytic activity">
    <reaction>
        <text>5 isopentenyl diphosphate + (2E,6E)-farnesyl diphosphate = all-trans-octaprenyl diphosphate + 5 diphosphate</text>
        <dbReference type="Rhea" id="RHEA:27798"/>
        <dbReference type="ChEBI" id="CHEBI:33019"/>
        <dbReference type="ChEBI" id="CHEBI:57711"/>
        <dbReference type="ChEBI" id="CHEBI:128769"/>
        <dbReference type="ChEBI" id="CHEBI:175763"/>
        <dbReference type="EC" id="2.5.1.90"/>
    </reaction>
</comment>
<comment type="cofactor">
    <cofactor evidence="1">
        <name>Mg(2+)</name>
        <dbReference type="ChEBI" id="CHEBI:18420"/>
    </cofactor>
    <text evidence="1">Binds 2 Mg(2+) ions per subunit.</text>
</comment>
<comment type="similarity">
    <text evidence="4">Belongs to the FPP/GGPP synthase family.</text>
</comment>
<gene>
    <name type="primary">ispB</name>
    <name type="ordered locus">HI_0881</name>
</gene>
<organism>
    <name type="scientific">Haemophilus influenzae (strain ATCC 51907 / DSM 11121 / KW20 / Rd)</name>
    <dbReference type="NCBI Taxonomy" id="71421"/>
    <lineage>
        <taxon>Bacteria</taxon>
        <taxon>Pseudomonadati</taxon>
        <taxon>Pseudomonadota</taxon>
        <taxon>Gammaproteobacteria</taxon>
        <taxon>Pasteurellales</taxon>
        <taxon>Pasteurellaceae</taxon>
        <taxon>Haemophilus</taxon>
    </lineage>
</organism>
<reference key="1">
    <citation type="journal article" date="1995" name="Science">
        <title>Whole-genome random sequencing and assembly of Haemophilus influenzae Rd.</title>
        <authorList>
            <person name="Fleischmann R.D."/>
            <person name="Adams M.D."/>
            <person name="White O."/>
            <person name="Clayton R.A."/>
            <person name="Kirkness E.F."/>
            <person name="Kerlavage A.R."/>
            <person name="Bult C.J."/>
            <person name="Tomb J.-F."/>
            <person name="Dougherty B.A."/>
            <person name="Merrick J.M."/>
            <person name="McKenney K."/>
            <person name="Sutton G.G."/>
            <person name="FitzHugh W."/>
            <person name="Fields C.A."/>
            <person name="Gocayne J.D."/>
            <person name="Scott J.D."/>
            <person name="Shirley R."/>
            <person name="Liu L.-I."/>
            <person name="Glodek A."/>
            <person name="Kelley J.M."/>
            <person name="Weidman J.F."/>
            <person name="Phillips C.A."/>
            <person name="Spriggs T."/>
            <person name="Hedblom E."/>
            <person name="Cotton M.D."/>
            <person name="Utterback T.R."/>
            <person name="Hanna M.C."/>
            <person name="Nguyen D.T."/>
            <person name="Saudek D.M."/>
            <person name="Brandon R.C."/>
            <person name="Fine L.D."/>
            <person name="Fritchman J.L."/>
            <person name="Fuhrmann J.L."/>
            <person name="Geoghagen N.S.M."/>
            <person name="Gnehm C.L."/>
            <person name="McDonald L.A."/>
            <person name="Small K.V."/>
            <person name="Fraser C.M."/>
            <person name="Smith H.O."/>
            <person name="Venter J.C."/>
        </authorList>
    </citation>
    <scope>NUCLEOTIDE SEQUENCE [LARGE SCALE GENOMIC DNA]</scope>
    <source>
        <strain>ATCC 51907 / DSM 11121 / KW20 / Rd</strain>
    </source>
</reference>
<reference key="2">
    <citation type="journal article" date="2000" name="Electrophoresis">
        <title>Two-dimensional map of the proteome of Haemophilus influenzae.</title>
        <authorList>
            <person name="Langen H."/>
            <person name="Takacs B."/>
            <person name="Evers S."/>
            <person name="Berndt P."/>
            <person name="Lahm H.W."/>
            <person name="Wipf B."/>
            <person name="Gray C."/>
            <person name="Fountoulakis M."/>
        </authorList>
    </citation>
    <scope>IDENTIFICATION BY MASS SPECTROMETRY</scope>
    <source>
        <strain>ATCC 51907 / DSM 11121 / KW20 / Rd</strain>
    </source>
</reference>
<keyword id="KW-0414">Isoprene biosynthesis</keyword>
<keyword id="KW-0460">Magnesium</keyword>
<keyword id="KW-0479">Metal-binding</keyword>
<keyword id="KW-1185">Reference proteome</keyword>
<keyword id="KW-0808">Transferase</keyword>
<name>ISPB_HAEIN</name>
<feature type="chain" id="PRO_0000124006" description="Octaprenyl diphosphate synthase">
    <location>
        <begin position="1"/>
        <end position="329"/>
    </location>
</feature>
<feature type="binding site" evidence="2">
    <location>
        <position position="51"/>
    </location>
    <ligand>
        <name>isopentenyl diphosphate</name>
        <dbReference type="ChEBI" id="CHEBI:128769"/>
    </ligand>
</feature>
<feature type="binding site" evidence="2">
    <location>
        <position position="54"/>
    </location>
    <ligand>
        <name>isopentenyl diphosphate</name>
        <dbReference type="ChEBI" id="CHEBI:128769"/>
    </ligand>
</feature>
<feature type="binding site" evidence="3">
    <location>
        <position position="83"/>
    </location>
    <ligand>
        <name>isopentenyl diphosphate</name>
        <dbReference type="ChEBI" id="CHEBI:128769"/>
    </ligand>
</feature>
<feature type="binding site" evidence="2">
    <location>
        <position position="90"/>
    </location>
    <ligand>
        <name>Mg(2+)</name>
        <dbReference type="ChEBI" id="CHEBI:18420"/>
        <label>1</label>
    </ligand>
</feature>
<feature type="binding site" evidence="2">
    <location>
        <position position="90"/>
    </location>
    <ligand>
        <name>Mg(2+)</name>
        <dbReference type="ChEBI" id="CHEBI:18420"/>
        <label>2</label>
    </ligand>
</feature>
<feature type="binding site" evidence="2">
    <location>
        <position position="94"/>
    </location>
    <ligand>
        <name>Mg(2+)</name>
        <dbReference type="ChEBI" id="CHEBI:18420"/>
        <label>1</label>
    </ligand>
</feature>
<feature type="binding site" evidence="2">
    <location>
        <position position="94"/>
    </location>
    <ligand>
        <name>Mg(2+)</name>
        <dbReference type="ChEBI" id="CHEBI:18420"/>
        <label>2</label>
    </ligand>
</feature>
<feature type="binding site" evidence="1">
    <location>
        <position position="99"/>
    </location>
    <ligand>
        <name>an all-trans-polyprenyl diphosphate</name>
        <dbReference type="ChEBI" id="CHEBI:58914"/>
    </ligand>
</feature>
<feature type="binding site" evidence="2">
    <location>
        <position position="100"/>
    </location>
    <ligand>
        <name>isopentenyl diphosphate</name>
        <dbReference type="ChEBI" id="CHEBI:128769"/>
    </ligand>
</feature>
<feature type="binding site" evidence="1">
    <location>
        <position position="176"/>
    </location>
    <ligand>
        <name>an all-trans-polyprenyl diphosphate</name>
        <dbReference type="ChEBI" id="CHEBI:58914"/>
    </ligand>
</feature>
<feature type="binding site" evidence="1">
    <location>
        <position position="177"/>
    </location>
    <ligand>
        <name>an all-trans-polyprenyl diphosphate</name>
        <dbReference type="ChEBI" id="CHEBI:58914"/>
    </ligand>
</feature>
<feature type="binding site" evidence="1">
    <location>
        <position position="214"/>
    </location>
    <ligand>
        <name>an all-trans-polyprenyl diphosphate</name>
        <dbReference type="ChEBI" id="CHEBI:58914"/>
    </ligand>
</feature>